<comment type="function">
    <text evidence="1 4">Involved in cytoplasm to vacuole transport (Cvt), pexophagy, mitophagy and nucleophagy (PubMed:28830792). Recruits mitochondria for their selective degradation via autophagy (mitophagy) during starvation, through its interaction with ATG32 (By similarity). Works as scaffold proteins that recruit ATG proteins to the pre-autophagosome (PAS), the site of vesicle/autophagosome formation (By similarity). Required for ATG9 anterograde transport from the mitochondria to the PAS (By similarity). Also recruits the ATG19-prAPE1 complex to the PAS (By similarity). Required for the Cvt vesicles completion (PubMed:28830792). Plays a role in morphological differentiation and cephalosporin production (PubMed:28830792).</text>
</comment>
<comment type="subunit">
    <text evidence="1">Homodimer and potential homooligomers (By similarity). Interacts with ATG1 kinase and the ATG19 and ATG34 cargo protein transporters (By similarity). Interacts with ATG9, ATG17 and ATG20 (By similarity).</text>
</comment>
<comment type="subcellular location">
    <subcellularLocation>
        <location evidence="1">Preautophagosomal structure membrane</location>
        <topology evidence="1">Peripheral membrane protein</topology>
    </subcellularLocation>
    <subcellularLocation>
        <location evidence="1">Vacuole membrane</location>
        <topology evidence="1">Peripheral membrane protein</topology>
    </subcellularLocation>
    <text evidence="1">During pexophagy, accumulates in the vacuolar membrane region, where the peroxisomes contact the vacuole (By similarity).</text>
</comment>
<comment type="disruption phenotype">
    <text evidence="4">Impairs the cytoplasm to vacuole transport (Cvt) pathway, pexophagy, mitophagy and non-selective autophagy (PubMed:28830792). Enhances conidiation and significantly reduces cephalosporin production (PubMed:28830792).</text>
</comment>
<comment type="similarity">
    <text evidence="6">Belongs to the ATG11 family.</text>
</comment>
<protein>
    <recommendedName>
        <fullName evidence="5">Autophagy-related protein 11</fullName>
    </recommendedName>
</protein>
<keyword id="KW-0072">Autophagy</keyword>
<keyword id="KW-0175">Coiled coil</keyword>
<keyword id="KW-0472">Membrane</keyword>
<keyword id="KW-0653">Protein transport</keyword>
<keyword id="KW-0813">Transport</keyword>
<keyword id="KW-0926">Vacuole</keyword>
<organism>
    <name type="scientific">Hapsidospora chrysogena</name>
    <name type="common">Acremonium chrysogenum</name>
    <dbReference type="NCBI Taxonomy" id="5044"/>
    <lineage>
        <taxon>Eukaryota</taxon>
        <taxon>Fungi</taxon>
        <taxon>Dikarya</taxon>
        <taxon>Ascomycota</taxon>
        <taxon>Pezizomycotina</taxon>
        <taxon>Sordariomycetes</taxon>
        <taxon>Hypocreomycetidae</taxon>
        <taxon>Hypocreales</taxon>
        <taxon>Bionectriaceae</taxon>
        <taxon>Hapsidospora</taxon>
    </lineage>
</organism>
<reference key="1">
    <citation type="journal article" date="2017" name="Fungal Genet. Biol.">
        <title>Functional analysis of the selective autophagy related gene Acatg11 in Acremonium chrysogenum.</title>
        <authorList>
            <person name="Liu J."/>
            <person name="Hao T."/>
            <person name="Hu P."/>
            <person name="Pan Y."/>
            <person name="Jiang X."/>
            <person name="Liu G."/>
        </authorList>
    </citation>
    <scope>NUCLEOTIDE SEQUENCE [GENOMIC DNA]</scope>
    <scope>FUNCTION</scope>
    <scope>DISRUPTION PHENOTYPE</scope>
</reference>
<dbReference type="EMBL" id="MF374633">
    <property type="protein sequence ID" value="ASV72107.1"/>
    <property type="molecule type" value="Genomic_DNA"/>
</dbReference>
<dbReference type="SMR" id="A0A286M9N3"/>
<dbReference type="GO" id="GO:1990316">
    <property type="term" value="C:Atg1/ULK1 kinase complex"/>
    <property type="evidence" value="ECO:0007669"/>
    <property type="project" value="TreeGrafter"/>
</dbReference>
<dbReference type="GO" id="GO:0034045">
    <property type="term" value="C:phagophore assembly site membrane"/>
    <property type="evidence" value="ECO:0007669"/>
    <property type="project" value="UniProtKB-SubCell"/>
</dbReference>
<dbReference type="GO" id="GO:0005774">
    <property type="term" value="C:vacuolar membrane"/>
    <property type="evidence" value="ECO:0007669"/>
    <property type="project" value="UniProtKB-SubCell"/>
</dbReference>
<dbReference type="GO" id="GO:0060090">
    <property type="term" value="F:molecular adaptor activity"/>
    <property type="evidence" value="ECO:0007669"/>
    <property type="project" value="TreeGrafter"/>
</dbReference>
<dbReference type="GO" id="GO:0019901">
    <property type="term" value="F:protein kinase binding"/>
    <property type="evidence" value="ECO:0007669"/>
    <property type="project" value="TreeGrafter"/>
</dbReference>
<dbReference type="GO" id="GO:0000045">
    <property type="term" value="P:autophagosome assembly"/>
    <property type="evidence" value="ECO:0007669"/>
    <property type="project" value="InterPro"/>
</dbReference>
<dbReference type="GO" id="GO:0000422">
    <property type="term" value="P:autophagy of mitochondrion"/>
    <property type="evidence" value="ECO:0007669"/>
    <property type="project" value="TreeGrafter"/>
</dbReference>
<dbReference type="GO" id="GO:0034727">
    <property type="term" value="P:piecemeal microautophagy of the nucleus"/>
    <property type="evidence" value="ECO:0007669"/>
    <property type="project" value="TreeGrafter"/>
</dbReference>
<dbReference type="GO" id="GO:0015031">
    <property type="term" value="P:protein transport"/>
    <property type="evidence" value="ECO:0007669"/>
    <property type="project" value="UniProtKB-KW"/>
</dbReference>
<dbReference type="GO" id="GO:0061709">
    <property type="term" value="P:reticulophagy"/>
    <property type="evidence" value="ECO:0007669"/>
    <property type="project" value="TreeGrafter"/>
</dbReference>
<dbReference type="GO" id="GO:0034517">
    <property type="term" value="P:ribophagy"/>
    <property type="evidence" value="ECO:0007669"/>
    <property type="project" value="TreeGrafter"/>
</dbReference>
<dbReference type="Gene3D" id="1.10.287.1490">
    <property type="match status" value="1"/>
</dbReference>
<dbReference type="InterPro" id="IPR040040">
    <property type="entry name" value="ATG11"/>
</dbReference>
<dbReference type="InterPro" id="IPR019460">
    <property type="entry name" value="Atg11_C"/>
</dbReference>
<dbReference type="InterPro" id="IPR045326">
    <property type="entry name" value="ATG17-like_dom"/>
</dbReference>
<dbReference type="InterPro" id="IPR011628">
    <property type="entry name" value="Cleaved_adhesin"/>
</dbReference>
<dbReference type="PANTHER" id="PTHR13222">
    <property type="entry name" value="RB1-INDUCIBLE COILED-COIL"/>
    <property type="match status" value="1"/>
</dbReference>
<dbReference type="PANTHER" id="PTHR13222:SF1">
    <property type="entry name" value="RB1-INDUCIBLE COILED-COIL PROTEIN 1"/>
    <property type="match status" value="1"/>
</dbReference>
<dbReference type="Pfam" id="PF10377">
    <property type="entry name" value="ATG11"/>
    <property type="match status" value="1"/>
</dbReference>
<dbReference type="Pfam" id="PF04108">
    <property type="entry name" value="ATG17_like"/>
    <property type="match status" value="1"/>
</dbReference>
<dbReference type="Pfam" id="PF07675">
    <property type="entry name" value="Cleaved_Adhesin"/>
    <property type="match status" value="1"/>
</dbReference>
<feature type="chain" id="PRO_0000443902" description="Autophagy-related protein 11">
    <location>
        <begin position="1"/>
        <end position="1423"/>
    </location>
</feature>
<feature type="region of interest" description="Disordered" evidence="3">
    <location>
        <begin position="583"/>
        <end position="660"/>
    </location>
</feature>
<feature type="region of interest" description="Disordered" evidence="3">
    <location>
        <begin position="1028"/>
        <end position="1048"/>
    </location>
</feature>
<feature type="region of interest" description="Disordered" evidence="3">
    <location>
        <begin position="1327"/>
        <end position="1423"/>
    </location>
</feature>
<feature type="coiled-coil region" evidence="2">
    <location>
        <begin position="551"/>
        <end position="589"/>
    </location>
</feature>
<feature type="coiled-coil region" evidence="2">
    <location>
        <begin position="625"/>
        <end position="978"/>
    </location>
</feature>
<feature type="coiled-coil region" evidence="2">
    <location>
        <begin position="1102"/>
        <end position="1130"/>
    </location>
</feature>
<feature type="compositionally biased region" description="Polar residues" evidence="3">
    <location>
        <begin position="585"/>
        <end position="602"/>
    </location>
</feature>
<feature type="compositionally biased region" description="Basic and acidic residues" evidence="3">
    <location>
        <begin position="631"/>
        <end position="648"/>
    </location>
</feature>
<feature type="compositionally biased region" description="Polar residues" evidence="3">
    <location>
        <begin position="650"/>
        <end position="660"/>
    </location>
</feature>
<feature type="compositionally biased region" description="Polar residues" evidence="3">
    <location>
        <begin position="1034"/>
        <end position="1047"/>
    </location>
</feature>
<feature type="compositionally biased region" description="Basic and acidic residues" evidence="3">
    <location>
        <begin position="1383"/>
        <end position="1395"/>
    </location>
</feature>
<gene>
    <name evidence="5" type="primary">ATG11</name>
    <name type="ORF">FG00382</name>
</gene>
<name>ATG11_HAPCH</name>
<evidence type="ECO:0000250" key="1">
    <source>
        <dbReference type="UniProtKB" id="Q12527"/>
    </source>
</evidence>
<evidence type="ECO:0000255" key="2"/>
<evidence type="ECO:0000256" key="3">
    <source>
        <dbReference type="SAM" id="MobiDB-lite"/>
    </source>
</evidence>
<evidence type="ECO:0000269" key="4">
    <source>
    </source>
</evidence>
<evidence type="ECO:0000303" key="5">
    <source>
    </source>
</evidence>
<evidence type="ECO:0000305" key="6"/>
<proteinExistence type="inferred from homology"/>
<sequence>MATQVLIAHTGQRLEVDTAQFSHLDDFKAWVGRNTPVAPKHFVALTPQGRTVKHASLYAEACCPSQKEIYIYDIRMSQAPSSDGSPSVVSQVPPPKRYSIPNAPNSIENVQAIASWQELYKQRRAWAVHLLEDCSAMDATARARFEEMDVMIKCVDAAVANLELSIKQIEPKYTELKKWVEPALEEHARLSTSWQQYLALARNTPVSPSMVKFMTRGQASKSNATLEDLIEPDTAKKAGTLAPTAHRRFNDKATELDRAAKKMYQTLDALIADFDKLMSRSVLGRSDESTQLLQDIEAVVKQIDSDYRTALSYSGSQKDVAQASKTASNHTERLVPNLKKRAKEMDDLLQYVTTSRNTVASDAVEFMRAITEITSLRGKLKDNIGILNQSEDDMTTFDYLRLIQQLPYMYASFLVEAIRRQEWNEKIKADSSTLANEMALFQDEEAKRRRRWQKMVGSTYGPGLDTNVIGLEVSVLGDDNSWPSVNKDELVAFLAALKDQETEEAILEDVGRLIQELNSPTKQQSKRLKAFKNGSVHEAALGRSGLMIRGDDELLRSLQDDKSKLESKLKTAESRVRRLEDLLHRQSQASRPGNLFQPQTNSIHERNDSASSVKAAPTDRQRASSEGTDTLLRRISELENELREEKQRSSRIQNDLSNRATQHDDMKNQIREVNSTKKDLLENMEALKREFVLERKSLEDEIKTLKARLEDTEDEMEHFGESREKERTSYEERAQQLEAELERIDKERRDEMLKAQGQVDFLRNENRIQREQRDTLERELQNTKDAGHATSKRLEALQEAADAHLQSLKELHSQLTGNDPVPDDGDLADVIQTKAADLLARLQNMESDTSLIRGDLDRTRDQVKELREELASTKDKLATEEAASIHVRECVSEEKAKVKALEHELAETREQLSRARARLADGETGSETLQKRVEEEEKKVASLSEELASRQSQVGSLEEELHLYKEKQEAACARASELTQRHETRDERSKELTQRLYSQNDRLCHLLERLGYAVSRKEGTMTITKVPRAERAAQNPNDSSDPGTSLRKSGMLGAKALHESADLDLLYWWNSADAATETEKYAAFMSKLGDFDADLFADTIYHRIKEVEHKARKWQKEARSYRDRAHIAQKDAHDKIAFRHFKEGDLALFLPTRNQQAGAWAAFNVGFPHYFLREQDSHRLRHREWLVARINRIQERVVDLSKSLQANDSASINDEENDNPFQLSDGLRWYLIDAQEDKPGAPATPGMGKSTVAANNVEATANIHTHMAGAKGKNRDSVHSIEGINKTLSKSLESRRSSSSSKRALPFAGAGAQALLKSNPIASETNSLRAAAPETPVATSPVQGGLLSTGEGGRPQPGAAGSSSARRPNDGPGEASGNGDAAKTAEPRRMLDRQESTGSPTKKSVVWDPLWSVDYTYESPGKK</sequence>
<accession>A0A286M9N3</accession>